<organism>
    <name type="scientific">Gallus gallus</name>
    <name type="common">Chicken</name>
    <dbReference type="NCBI Taxonomy" id="9031"/>
    <lineage>
        <taxon>Eukaryota</taxon>
        <taxon>Metazoa</taxon>
        <taxon>Chordata</taxon>
        <taxon>Craniata</taxon>
        <taxon>Vertebrata</taxon>
        <taxon>Euteleostomi</taxon>
        <taxon>Archelosauria</taxon>
        <taxon>Archosauria</taxon>
        <taxon>Dinosauria</taxon>
        <taxon>Saurischia</taxon>
        <taxon>Theropoda</taxon>
        <taxon>Coelurosauria</taxon>
        <taxon>Aves</taxon>
        <taxon>Neognathae</taxon>
        <taxon>Galloanserae</taxon>
        <taxon>Galliformes</taxon>
        <taxon>Phasianidae</taxon>
        <taxon>Phasianinae</taxon>
        <taxon>Gallus</taxon>
    </lineage>
</organism>
<proteinExistence type="evidence at protein level"/>
<dbReference type="EC" id="3.4.23.-"/>
<dbReference type="EMBL" id="AY043492">
    <property type="protein sequence ID" value="AAK95408.1"/>
    <property type="molecule type" value="mRNA"/>
</dbReference>
<dbReference type="EMBL" id="DQ084362">
    <property type="protein sequence ID" value="AAY85979.1"/>
    <property type="molecule type" value="mRNA"/>
</dbReference>
<dbReference type="RefSeq" id="NP_989494.2">
    <property type="nucleotide sequence ID" value="NM_204163.3"/>
</dbReference>
<dbReference type="RefSeq" id="XP_040556470.1">
    <property type="nucleotide sequence ID" value="XM_040700536.2"/>
</dbReference>
<dbReference type="RefSeq" id="XP_040556472.1">
    <property type="nucleotide sequence ID" value="XM_040700538.2"/>
</dbReference>
<dbReference type="RefSeq" id="XP_046773585.1">
    <property type="nucleotide sequence ID" value="XM_046917629.1"/>
</dbReference>
<dbReference type="RefSeq" id="XP_046773586.1">
    <property type="nucleotide sequence ID" value="XM_046917630.1"/>
</dbReference>
<dbReference type="RefSeq" id="XP_046773587.1">
    <property type="nucleotide sequence ID" value="XM_046917631.1"/>
</dbReference>
<dbReference type="RefSeq" id="XP_046797300.1">
    <property type="nucleotide sequence ID" value="XM_046941344.1"/>
</dbReference>
<dbReference type="SMR" id="Q4JIM4"/>
<dbReference type="FunCoup" id="Q4JIM4">
    <property type="interactions" value="2456"/>
</dbReference>
<dbReference type="STRING" id="9031.ENSGALP00000069770"/>
<dbReference type="MEROPS" id="A22.001"/>
<dbReference type="PaxDb" id="9031-ENSGALP00000031992"/>
<dbReference type="GeneID" id="373977"/>
<dbReference type="KEGG" id="gga:373977"/>
<dbReference type="CTD" id="5663"/>
<dbReference type="VEuPathDB" id="HostDB:geneid_373977"/>
<dbReference type="eggNOG" id="KOG2736">
    <property type="taxonomic scope" value="Eukaryota"/>
</dbReference>
<dbReference type="HOGENOM" id="CLU_022975_3_0_1"/>
<dbReference type="InParanoid" id="Q4JIM4"/>
<dbReference type="OrthoDB" id="20287at2759"/>
<dbReference type="PhylomeDB" id="Q4JIM4"/>
<dbReference type="TreeFam" id="TF315040"/>
<dbReference type="Reactome" id="R-GGA-1251985">
    <property type="pathway name" value="Nuclear signaling by ERBB4"/>
</dbReference>
<dbReference type="Reactome" id="R-GGA-193692">
    <property type="pathway name" value="Regulated proteolysis of p75NTR"/>
</dbReference>
<dbReference type="Reactome" id="R-GGA-205043">
    <property type="pathway name" value="NRIF signals cell death from the nucleus"/>
</dbReference>
<dbReference type="Reactome" id="R-GGA-3928665">
    <property type="pathway name" value="EPH-ephrin mediated repulsion of cells"/>
</dbReference>
<dbReference type="Reactome" id="R-GGA-6798695">
    <property type="pathway name" value="Neutrophil degranulation"/>
</dbReference>
<dbReference type="Reactome" id="R-GGA-9013507">
    <property type="pathway name" value="NOTCH3 Activation and Transmission of Signal to the Nucleus"/>
</dbReference>
<dbReference type="Reactome" id="R-GGA-9017802">
    <property type="pathway name" value="Noncanonical activation of NOTCH3"/>
</dbReference>
<dbReference type="Reactome" id="R-GGA-9839383">
    <property type="pathway name" value="TGFBR3 PTM regulation"/>
</dbReference>
<dbReference type="PRO" id="PR:Q4JIM4"/>
<dbReference type="Proteomes" id="UP000000539">
    <property type="component" value="Chromosome 5"/>
</dbReference>
<dbReference type="Bgee" id="ENSGALG00000009320">
    <property type="expression patterns" value="Expressed in spermatid and 13 other cell types or tissues"/>
</dbReference>
<dbReference type="GO" id="GO:0030424">
    <property type="term" value="C:axon"/>
    <property type="evidence" value="ECO:0007669"/>
    <property type="project" value="UniProtKB-SubCell"/>
</dbReference>
<dbReference type="GO" id="GO:0005783">
    <property type="term" value="C:endoplasmic reticulum"/>
    <property type="evidence" value="ECO:0000250"/>
    <property type="project" value="AgBase"/>
</dbReference>
<dbReference type="GO" id="GO:0005789">
    <property type="term" value="C:endoplasmic reticulum membrane"/>
    <property type="evidence" value="ECO:0007669"/>
    <property type="project" value="UniProtKB-SubCell"/>
</dbReference>
<dbReference type="GO" id="GO:0070765">
    <property type="term" value="C:gamma-secretase complex"/>
    <property type="evidence" value="ECO:0000250"/>
    <property type="project" value="UniProtKB"/>
</dbReference>
<dbReference type="GO" id="GO:0005794">
    <property type="term" value="C:Golgi apparatus"/>
    <property type="evidence" value="ECO:0000250"/>
    <property type="project" value="AgBase"/>
</dbReference>
<dbReference type="GO" id="GO:0000139">
    <property type="term" value="C:Golgi membrane"/>
    <property type="evidence" value="ECO:0007669"/>
    <property type="project" value="UniProtKB-SubCell"/>
</dbReference>
<dbReference type="GO" id="GO:0016020">
    <property type="term" value="C:membrane"/>
    <property type="evidence" value="ECO:0000250"/>
    <property type="project" value="UniProtKB"/>
</dbReference>
<dbReference type="GO" id="GO:0005739">
    <property type="term" value="C:mitochondrion"/>
    <property type="evidence" value="ECO:0000250"/>
    <property type="project" value="AgBase"/>
</dbReference>
<dbReference type="GO" id="GO:0005886">
    <property type="term" value="C:plasma membrane"/>
    <property type="evidence" value="ECO:0000250"/>
    <property type="project" value="UniProtKB"/>
</dbReference>
<dbReference type="GO" id="GO:0045202">
    <property type="term" value="C:synapse"/>
    <property type="evidence" value="ECO:0007669"/>
    <property type="project" value="UniProtKB-SubCell"/>
</dbReference>
<dbReference type="GO" id="GO:0042500">
    <property type="term" value="F:aspartic endopeptidase activity, intramembrane cleaving"/>
    <property type="evidence" value="ECO:0000250"/>
    <property type="project" value="UniProtKB"/>
</dbReference>
<dbReference type="GO" id="GO:0042982">
    <property type="term" value="P:amyloid precursor protein metabolic process"/>
    <property type="evidence" value="ECO:0000250"/>
    <property type="project" value="UniProtKB"/>
</dbReference>
<dbReference type="GO" id="GO:0034205">
    <property type="term" value="P:amyloid-beta formation"/>
    <property type="evidence" value="ECO:0000250"/>
    <property type="project" value="UniProtKB"/>
</dbReference>
<dbReference type="GO" id="GO:0006915">
    <property type="term" value="P:apoptotic process"/>
    <property type="evidence" value="ECO:0007669"/>
    <property type="project" value="UniProtKB-KW"/>
</dbReference>
<dbReference type="GO" id="GO:0055074">
    <property type="term" value="P:calcium ion homeostasis"/>
    <property type="evidence" value="ECO:0000318"/>
    <property type="project" value="GO_Central"/>
</dbReference>
<dbReference type="GO" id="GO:0007155">
    <property type="term" value="P:cell adhesion"/>
    <property type="evidence" value="ECO:0007669"/>
    <property type="project" value="UniProtKB-KW"/>
</dbReference>
<dbReference type="GO" id="GO:0035556">
    <property type="term" value="P:intracellular signal transduction"/>
    <property type="evidence" value="ECO:0007669"/>
    <property type="project" value="InterPro"/>
</dbReference>
<dbReference type="GO" id="GO:0006509">
    <property type="term" value="P:membrane protein ectodomain proteolysis"/>
    <property type="evidence" value="ECO:0000250"/>
    <property type="project" value="AgBase"/>
</dbReference>
<dbReference type="GO" id="GO:0007219">
    <property type="term" value="P:Notch signaling pathway"/>
    <property type="evidence" value="ECO:0000318"/>
    <property type="project" value="GO_Central"/>
</dbReference>
<dbReference type="GO" id="GO:0016485">
    <property type="term" value="P:protein processing"/>
    <property type="evidence" value="ECO:0000250"/>
    <property type="project" value="AgBase"/>
</dbReference>
<dbReference type="GO" id="GO:0060828">
    <property type="term" value="P:regulation of canonical Wnt signaling pathway"/>
    <property type="evidence" value="ECO:0000250"/>
    <property type="project" value="UniProtKB"/>
</dbReference>
<dbReference type="GO" id="GO:0042325">
    <property type="term" value="P:regulation of phosphorylation"/>
    <property type="evidence" value="ECO:0000250"/>
    <property type="project" value="AgBase"/>
</dbReference>
<dbReference type="FunFam" id="1.10.472.100:FF:000001">
    <property type="entry name" value="Presenilin"/>
    <property type="match status" value="1"/>
</dbReference>
<dbReference type="Gene3D" id="1.10.472.100">
    <property type="entry name" value="Presenilin"/>
    <property type="match status" value="1"/>
</dbReference>
<dbReference type="InterPro" id="IPR002031">
    <property type="entry name" value="Pept_A22A_PS1"/>
</dbReference>
<dbReference type="InterPro" id="IPR001108">
    <property type="entry name" value="Peptidase_A22A"/>
</dbReference>
<dbReference type="InterPro" id="IPR006639">
    <property type="entry name" value="Preselin/SPP"/>
</dbReference>
<dbReference type="InterPro" id="IPR042524">
    <property type="entry name" value="Presenilin_C"/>
</dbReference>
<dbReference type="PANTHER" id="PTHR10202">
    <property type="entry name" value="PRESENILIN"/>
    <property type="match status" value="1"/>
</dbReference>
<dbReference type="PANTHER" id="PTHR10202:SF18">
    <property type="entry name" value="PRESENILIN-1"/>
    <property type="match status" value="1"/>
</dbReference>
<dbReference type="Pfam" id="PF01080">
    <property type="entry name" value="Presenilin"/>
    <property type="match status" value="1"/>
</dbReference>
<dbReference type="PRINTS" id="PR01072">
    <property type="entry name" value="PRESENILIN"/>
</dbReference>
<dbReference type="PRINTS" id="PR01073">
    <property type="entry name" value="PRESENILIN1"/>
</dbReference>
<dbReference type="SMART" id="SM00730">
    <property type="entry name" value="PSN"/>
    <property type="match status" value="1"/>
</dbReference>
<protein>
    <recommendedName>
        <fullName>Presenilin-1</fullName>
        <shortName>PS-1</shortName>
        <ecNumber>3.4.23.-</ecNumber>
    </recommendedName>
    <component>
        <recommendedName>
            <fullName>Presenilin-1 NTF subunit</fullName>
        </recommendedName>
    </component>
    <component>
        <recommendedName>
            <fullName>Presenilin-1 CTF subunit</fullName>
        </recommendedName>
    </component>
</protein>
<reference key="1">
    <citation type="journal article" date="2002" name="Blood Cells Mol. Dis.">
        <title>Identification of the presenilins in hematopoietic cells with localization of presenilin 1 to neutrophil and platelet granules.</title>
        <authorList>
            <person name="Mirinics Z.K."/>
            <person name="Calafat J."/>
            <person name="Udby L."/>
            <person name="Lovelock J."/>
            <person name="Kjeldsen L."/>
            <person name="Rothermund K."/>
            <person name="Sisodia S.S."/>
            <person name="Borregaard N."/>
            <person name="Corey S.J."/>
        </authorList>
    </citation>
    <scope>NUCLEOTIDE SEQUENCE [MRNA]</scope>
    <source>
        <tissue>B-cell</tissue>
    </source>
</reference>
<reference key="2">
    <citation type="journal article" date="2005" name="Mol. Cell. Neurosci.">
        <title>Assembly of the N-cadherin complex during synapse formation involves uncoupling of p120-catenin and association with presenilin 1.</title>
        <authorList>
            <person name="Rubio M.E."/>
            <person name="Curcio C."/>
            <person name="Chauvet N."/>
            <person name="Bruses J.L."/>
        </authorList>
    </citation>
    <scope>NUCLEOTIDE SEQUENCE [MRNA]</scope>
    <scope>INTERACTION WITH CDH2</scope>
    <scope>SUBCELLULAR LOCATION</scope>
    <source>
        <tissue>Ciliary ganglion</tissue>
    </source>
</reference>
<sequence length="468" mass="52831">MTELSAHLPQFQHGQMTENFPDNHLSNTNDNSERRRHDNSERRRNDNPGSETNGQPQNNIQQVVDQDEEEDEELTLKYGAKHVIMLFVPVTLCMVVVVATIKSVSFYTRKDGQLIYTPFTEETDTIGQRALNSILNAAIMISVIIVMTILLVVLYKYRCYKVIHGWLIISSLLLLFFFSFIYLGEVFKTYNVAMDYITVALIIWNFGVVGMICIHWKGPLRLQQAYLIMISALMALVFIKYLPEWTAWLILAVISVYDLVAVLCPKGPLRMLVETAQERNETLFPALIYSSTMVWLVNMAEEDPEGQRKASKNSTYDKQAPANQSQNEDAEADDGGFSQEWQQQRDNRIGPIESTPESRAAVQALPSNSQTSEDPEERGVKLGLGDFIFYSVLVGKASATASGDWNTTLACFVAILIGLCLTLLLLAIFKKALPALPISITFGLVFYFATDNLVQPFMDQLAFHQFYI</sequence>
<evidence type="ECO:0000250" key="1">
    <source>
        <dbReference type="UniProtKB" id="P49768"/>
    </source>
</evidence>
<evidence type="ECO:0000256" key="2">
    <source>
        <dbReference type="SAM" id="MobiDB-lite"/>
    </source>
</evidence>
<evidence type="ECO:0000269" key="3">
    <source>
    </source>
</evidence>
<evidence type="ECO:0000305" key="4"/>
<evidence type="ECO:0000305" key="5">
    <source>
    </source>
</evidence>
<comment type="function">
    <text evidence="1">Catalytic subunit of the gamma-secretase complex, an endoprotease complex that catalyzes the intramembrane cleavage of integral membrane proteins such as Notch receptors and APP (amyloid-beta precursor protein). Requires the presence of the other members of the gamma-secretase complex for protease activity. Plays a role in Notch and Wnt signaling cascades and regulation of downstream processes via its role in processing key regulatory proteins.</text>
</comment>
<comment type="subunit">
    <text evidence="1 3">Homodimer. The functional gamma-secretase complex is composed of at least four polypeptides: a presenilin homodimer (PSEN1 or PSEN2), nicastrin (NCSTN), APH1 (APH1A or APH1B) and PEN2. Such minimal complex is sufficient for secretase activity (By similarity). Predominantly heterodimer of a N-terminal (NTF) and a C-terminal (CTF) endoproteolytical fragment (By similarity). Interacts with CDH2 (PubMed:16046145).</text>
</comment>
<comment type="subcellular location">
    <subcellularLocation>
        <location evidence="5">Endoplasmic reticulum membrane</location>
        <topology evidence="1">Multi-pass membrane protein</topology>
    </subcellularLocation>
    <subcellularLocation>
        <location evidence="5">Golgi apparatus membrane</location>
        <topology evidence="1">Multi-pass membrane protein</topology>
    </subcellularLocation>
    <subcellularLocation>
        <location evidence="1">Cytoplasmic granule</location>
    </subcellularLocation>
    <subcellularLocation>
        <location evidence="5">Cell membrane</location>
    </subcellularLocation>
    <subcellularLocation>
        <location evidence="3">Cell projection</location>
        <location evidence="3">Axon</location>
    </subcellularLocation>
    <subcellularLocation>
        <location evidence="3">Synapse</location>
    </subcellularLocation>
    <subcellularLocation>
        <location evidence="1">Cell projection</location>
        <location evidence="1">Neuron projection</location>
    </subcellularLocation>
</comment>
<comment type="domain">
    <text evidence="1">The PAL motif is required for normal active site conformation.</text>
</comment>
<comment type="domain">
    <text evidence="1">Substrates, such as NOTCH1 and APP peptides, are bound between PSEN1 transmembrane domains and via the first lumenal loop and the cytoplasmic loop between the sixth and seventh transmembrane domains. Substrate binding causes a conformation change and formation of an intermolecular antiparallel beta-sheet between PSEN1 and its substrates.</text>
</comment>
<comment type="PTM">
    <text evidence="1">Heterogeneous proteolytic processing generates N-terminal (NTF) and C-terminal (CTF) fragments of approximately 35 and 20 kDa, respectively. During apoptosis, the C-terminal fragment (CTF) is further cleaved by a caspase.</text>
</comment>
<comment type="similarity">
    <text evidence="4">Belongs to the peptidase A22A family.</text>
</comment>
<keyword id="KW-0053">Apoptosis</keyword>
<keyword id="KW-0130">Cell adhesion</keyword>
<keyword id="KW-1003">Cell membrane</keyword>
<keyword id="KW-0966">Cell projection</keyword>
<keyword id="KW-0256">Endoplasmic reticulum</keyword>
<keyword id="KW-0333">Golgi apparatus</keyword>
<keyword id="KW-0378">Hydrolase</keyword>
<keyword id="KW-0472">Membrane</keyword>
<keyword id="KW-0914">Notch signaling pathway</keyword>
<keyword id="KW-0597">Phosphoprotein</keyword>
<keyword id="KW-0645">Protease</keyword>
<keyword id="KW-1185">Reference proteome</keyword>
<keyword id="KW-0770">Synapse</keyword>
<keyword id="KW-0812">Transmembrane</keyword>
<keyword id="KW-1133">Transmembrane helix</keyword>
<gene>
    <name type="primary">PSEN1</name>
</gene>
<accession>Q4JIM4</accession>
<accession>Q90X08</accession>
<name>PSN1_CHICK</name>
<feature type="chain" id="PRO_0000236063" description="Presenilin-1 NTF subunit">
    <location>
        <begin position="1"/>
        <end position="299"/>
    </location>
</feature>
<feature type="chain" id="PRO_0000236064" description="Presenilin-1 CTF subunit">
    <location>
        <begin position="300"/>
        <end position="468"/>
    </location>
</feature>
<feature type="topological domain" description="Cytoplasmic" evidence="1">
    <location>
        <begin position="1"/>
        <end position="83"/>
    </location>
</feature>
<feature type="transmembrane region" description="Helical" evidence="1">
    <location>
        <begin position="84"/>
        <end position="104"/>
    </location>
</feature>
<feature type="topological domain" description="Lumenal" evidence="1">
    <location>
        <begin position="105"/>
        <end position="133"/>
    </location>
</feature>
<feature type="transmembrane region" description="Helical" evidence="1">
    <location>
        <begin position="134"/>
        <end position="154"/>
    </location>
</feature>
<feature type="topological domain" description="Cytoplasmic" evidence="1">
    <location>
        <begin position="155"/>
        <end position="167"/>
    </location>
</feature>
<feature type="transmembrane region" description="Helical" evidence="1">
    <location>
        <begin position="168"/>
        <end position="190"/>
    </location>
</feature>
<feature type="topological domain" description="Lumenal" evidence="1">
    <location>
        <begin position="191"/>
        <end position="195"/>
    </location>
</feature>
<feature type="transmembrane region" description="Helical" evidence="1">
    <location>
        <begin position="196"/>
        <end position="217"/>
    </location>
</feature>
<feature type="topological domain" description="Cytoplasmic" evidence="1">
    <location>
        <begin position="218"/>
        <end position="221"/>
    </location>
</feature>
<feature type="transmembrane region" description="Helical" evidence="1">
    <location>
        <begin position="222"/>
        <end position="242"/>
    </location>
</feature>
<feature type="topological domain" description="Lumenal" evidence="1">
    <location>
        <begin position="243"/>
        <end position="249"/>
    </location>
</feature>
<feature type="transmembrane region" description="Helical" evidence="1">
    <location>
        <begin position="250"/>
        <end position="273"/>
    </location>
</feature>
<feature type="topological domain" description="Cytoplasmic" evidence="1">
    <location>
        <begin position="274"/>
        <end position="381"/>
    </location>
</feature>
<feature type="transmembrane region" description="Helical" evidence="1">
    <location>
        <begin position="382"/>
        <end position="402"/>
    </location>
</feature>
<feature type="topological domain" description="Lumenal" evidence="1">
    <location>
        <begin position="403"/>
        <end position="408"/>
    </location>
</feature>
<feature type="transmembrane region" description="Helical" evidence="1">
    <location>
        <begin position="409"/>
        <end position="429"/>
    </location>
</feature>
<feature type="topological domain" description="Cytoplasmic" evidence="1">
    <location>
        <begin position="430"/>
        <end position="433"/>
    </location>
</feature>
<feature type="transmembrane region" description="Helical" evidence="1">
    <location>
        <begin position="434"/>
        <end position="454"/>
    </location>
</feature>
<feature type="topological domain" description="Lumenal" evidence="1">
    <location>
        <begin position="455"/>
        <end position="468"/>
    </location>
</feature>
<feature type="region of interest" description="Disordered" evidence="2">
    <location>
        <begin position="1"/>
        <end position="66"/>
    </location>
</feature>
<feature type="region of interest" description="Important for cleavage of target proteins" evidence="1">
    <location>
        <begin position="289"/>
        <end position="291"/>
    </location>
</feature>
<feature type="region of interest" description="Disordered" evidence="2">
    <location>
        <begin position="306"/>
        <end position="378"/>
    </location>
</feature>
<feature type="region of interest" description="Important for cleavage of target proteins" evidence="1">
    <location>
        <begin position="378"/>
        <end position="382"/>
    </location>
</feature>
<feature type="region of interest" description="Important for cleavage of target proteins" evidence="1">
    <location>
        <begin position="433"/>
        <end position="435"/>
    </location>
</feature>
<feature type="short sequence motif" description="PAL" evidence="4">
    <location>
        <begin position="434"/>
        <end position="436"/>
    </location>
</feature>
<feature type="compositionally biased region" description="Polar residues" evidence="2">
    <location>
        <begin position="12"/>
        <end position="30"/>
    </location>
</feature>
<feature type="compositionally biased region" description="Basic and acidic residues" evidence="2">
    <location>
        <begin position="31"/>
        <end position="46"/>
    </location>
</feature>
<feature type="compositionally biased region" description="Polar residues" evidence="2">
    <location>
        <begin position="48"/>
        <end position="60"/>
    </location>
</feature>
<feature type="compositionally biased region" description="Polar residues" evidence="2">
    <location>
        <begin position="312"/>
        <end position="327"/>
    </location>
</feature>
<feature type="active site" evidence="1">
    <location>
        <position position="258"/>
    </location>
</feature>
<feature type="active site" evidence="1">
    <location>
        <position position="386"/>
    </location>
</feature>
<feature type="site" description="Cleavage; alternate" evidence="1">
    <location>
        <begin position="292"/>
        <end position="293"/>
    </location>
</feature>
<feature type="site" description="Cleavage; alternate" evidence="1">
    <location>
        <begin position="293"/>
        <end position="294"/>
    </location>
</feature>
<feature type="site" description="Cleavage" evidence="1">
    <location>
        <begin position="299"/>
        <end position="300"/>
    </location>
</feature>
<feature type="site" description="Cleavage; by caspase" evidence="1">
    <location>
        <begin position="346"/>
        <end position="347"/>
    </location>
</feature>